<comment type="function">
    <text evidence="1 3">Catalyzes the phosphorylation of D-fructose 6-phosphate to fructose 1,6-bisphosphate by ATP, the first committing step of glycolysis.</text>
</comment>
<comment type="catalytic activity">
    <reaction evidence="1 3">
        <text>beta-D-fructose 6-phosphate + ATP = beta-D-fructose 1,6-bisphosphate + ADP + H(+)</text>
        <dbReference type="Rhea" id="RHEA:16109"/>
        <dbReference type="ChEBI" id="CHEBI:15378"/>
        <dbReference type="ChEBI" id="CHEBI:30616"/>
        <dbReference type="ChEBI" id="CHEBI:32966"/>
        <dbReference type="ChEBI" id="CHEBI:57634"/>
        <dbReference type="ChEBI" id="CHEBI:456216"/>
        <dbReference type="EC" id="2.7.1.11"/>
    </reaction>
</comment>
<comment type="cofactor">
    <cofactor evidence="1 3">
        <name>Mg(2+)</name>
        <dbReference type="ChEBI" id="CHEBI:18420"/>
    </cofactor>
</comment>
<comment type="activity regulation">
    <text evidence="3">Exists as both a dimer and a tetramer and the equilibrium between the active tetramer and inactive dimer is regulated by several allosteric effectors, including protein concentration, pH, ADP, ATP, AMP-PNP, and F6P. ADP, ATP, low pH, and AMP-PNP shift the equilibrium toward the dimer.</text>
</comment>
<comment type="pathway">
    <text evidence="1">Carbohydrate degradation; glycolysis; D-glyceraldehyde 3-phosphate and glycerone phosphate from D-glucose: step 3/4.</text>
</comment>
<comment type="subunit">
    <text evidence="1 2 3">Homotetramer (By similarity). Homodimer, inactive form (PubMed:29940104). Component of a possible RNA degradosome complex composed of cshA, eno, pfkA, pnp, rnjA, rnjB, rnpA and rny. Interacts specifically with RNA helicase CshA.</text>
</comment>
<comment type="subcellular location">
    <subcellularLocation>
        <location evidence="1">Cytoplasm</location>
    </subcellularLocation>
</comment>
<comment type="similarity">
    <text evidence="1">Belongs to the phosphofructokinase type A (PFKA) family. ATP-dependent PFK group I subfamily. Prokaryotic clade 'B1' sub-subfamily.</text>
</comment>
<comment type="sequence caution" evidence="4">
    <conflict type="erroneous initiation">
        <sequence resource="EMBL-CDS" id="ABD30875"/>
    </conflict>
    <text>Truncated N-terminus.</text>
</comment>
<dbReference type="EC" id="2.7.1.11" evidence="1 3"/>
<dbReference type="EMBL" id="CP000253">
    <property type="protein sequence ID" value="ABD30875.1"/>
    <property type="status" value="ALT_INIT"/>
    <property type="molecule type" value="Genomic_DNA"/>
</dbReference>
<dbReference type="RefSeq" id="WP_000717561.1">
    <property type="nucleotide sequence ID" value="NZ_LS483365.1"/>
</dbReference>
<dbReference type="RefSeq" id="WP_001790588.1">
    <property type="nucleotide sequence ID" value="NC_007795.1"/>
</dbReference>
<dbReference type="RefSeq" id="YP_500312.1">
    <property type="nucleotide sequence ID" value="NC_007795.1"/>
</dbReference>
<dbReference type="PDB" id="5XOE">
    <property type="method" value="X-ray"/>
    <property type="resolution" value="2.98 A"/>
    <property type="chains" value="A=1-322"/>
</dbReference>
<dbReference type="PDB" id="5XZ6">
    <property type="method" value="X-ray"/>
    <property type="resolution" value="2.70 A"/>
    <property type="chains" value="A=1-322"/>
</dbReference>
<dbReference type="PDB" id="5XZ7">
    <property type="method" value="X-ray"/>
    <property type="resolution" value="1.60 A"/>
    <property type="chains" value="A=1-322"/>
</dbReference>
<dbReference type="PDB" id="5XZ8">
    <property type="method" value="X-ray"/>
    <property type="resolution" value="1.95 A"/>
    <property type="chains" value="A=1-322"/>
</dbReference>
<dbReference type="PDB" id="5XZ9">
    <property type="method" value="X-ray"/>
    <property type="resolution" value="2.00 A"/>
    <property type="chains" value="A=1-322"/>
</dbReference>
<dbReference type="PDB" id="5XZA">
    <property type="method" value="X-ray"/>
    <property type="resolution" value="1.90 A"/>
    <property type="chains" value="A=1-322"/>
</dbReference>
<dbReference type="PDBsum" id="5XOE"/>
<dbReference type="PDBsum" id="5XZ6"/>
<dbReference type="PDBsum" id="5XZ7"/>
<dbReference type="PDBsum" id="5XZ8"/>
<dbReference type="PDBsum" id="5XZ9"/>
<dbReference type="PDBsum" id="5XZA"/>
<dbReference type="SMR" id="Q2FXM8"/>
<dbReference type="STRING" id="93061.SAOUHSC_01807"/>
<dbReference type="PaxDb" id="1280-SAXN108_1727"/>
<dbReference type="GeneID" id="3919277"/>
<dbReference type="KEGG" id="sao:SAOUHSC_01807"/>
<dbReference type="PATRIC" id="fig|93061.5.peg.1647"/>
<dbReference type="eggNOG" id="COG0205">
    <property type="taxonomic scope" value="Bacteria"/>
</dbReference>
<dbReference type="HOGENOM" id="CLU_020655_0_1_9"/>
<dbReference type="OrthoDB" id="9802503at2"/>
<dbReference type="BRENDA" id="2.7.1.11">
    <property type="organism ID" value="3352"/>
</dbReference>
<dbReference type="UniPathway" id="UPA00109">
    <property type="reaction ID" value="UER00182"/>
</dbReference>
<dbReference type="Proteomes" id="UP000008816">
    <property type="component" value="Chromosome"/>
</dbReference>
<dbReference type="GO" id="GO:0005945">
    <property type="term" value="C:6-phosphofructokinase complex"/>
    <property type="evidence" value="ECO:0000318"/>
    <property type="project" value="GO_Central"/>
</dbReference>
<dbReference type="GO" id="GO:0003872">
    <property type="term" value="F:6-phosphofructokinase activity"/>
    <property type="evidence" value="ECO:0000318"/>
    <property type="project" value="GO_Central"/>
</dbReference>
<dbReference type="GO" id="GO:0005524">
    <property type="term" value="F:ATP binding"/>
    <property type="evidence" value="ECO:0007669"/>
    <property type="project" value="UniProtKB-KW"/>
</dbReference>
<dbReference type="GO" id="GO:0070095">
    <property type="term" value="F:fructose-6-phosphate binding"/>
    <property type="evidence" value="ECO:0000318"/>
    <property type="project" value="GO_Central"/>
</dbReference>
<dbReference type="GO" id="GO:0046872">
    <property type="term" value="F:metal ion binding"/>
    <property type="evidence" value="ECO:0007669"/>
    <property type="project" value="UniProtKB-KW"/>
</dbReference>
<dbReference type="GO" id="GO:0061621">
    <property type="term" value="P:canonical glycolysis"/>
    <property type="evidence" value="ECO:0000318"/>
    <property type="project" value="GO_Central"/>
</dbReference>
<dbReference type="GO" id="GO:0030388">
    <property type="term" value="P:fructose 1,6-bisphosphate metabolic process"/>
    <property type="evidence" value="ECO:0000318"/>
    <property type="project" value="GO_Central"/>
</dbReference>
<dbReference type="GO" id="GO:0006002">
    <property type="term" value="P:fructose 6-phosphate metabolic process"/>
    <property type="evidence" value="ECO:0000318"/>
    <property type="project" value="GO_Central"/>
</dbReference>
<dbReference type="FunFam" id="3.40.50.450:FF:000001">
    <property type="entry name" value="ATP-dependent 6-phosphofructokinase"/>
    <property type="match status" value="1"/>
</dbReference>
<dbReference type="FunFam" id="3.40.50.460:FF:000002">
    <property type="entry name" value="ATP-dependent 6-phosphofructokinase"/>
    <property type="match status" value="1"/>
</dbReference>
<dbReference type="Gene3D" id="3.40.50.450">
    <property type="match status" value="1"/>
</dbReference>
<dbReference type="Gene3D" id="3.40.50.460">
    <property type="entry name" value="Phosphofructokinase domain"/>
    <property type="match status" value="1"/>
</dbReference>
<dbReference type="HAMAP" id="MF_00339">
    <property type="entry name" value="Phosphofructokinase_I_B1"/>
    <property type="match status" value="1"/>
</dbReference>
<dbReference type="InterPro" id="IPR022953">
    <property type="entry name" value="ATP_PFK"/>
</dbReference>
<dbReference type="InterPro" id="IPR012003">
    <property type="entry name" value="ATP_PFK_prok-type"/>
</dbReference>
<dbReference type="InterPro" id="IPR012828">
    <property type="entry name" value="PFKA_ATP_prok"/>
</dbReference>
<dbReference type="InterPro" id="IPR015912">
    <property type="entry name" value="Phosphofructokinase_CS"/>
</dbReference>
<dbReference type="InterPro" id="IPR000023">
    <property type="entry name" value="Phosphofructokinase_dom"/>
</dbReference>
<dbReference type="InterPro" id="IPR035966">
    <property type="entry name" value="PKF_sf"/>
</dbReference>
<dbReference type="NCBIfam" id="TIGR02482">
    <property type="entry name" value="PFKA_ATP"/>
    <property type="match status" value="1"/>
</dbReference>
<dbReference type="NCBIfam" id="NF002872">
    <property type="entry name" value="PRK03202.1"/>
    <property type="match status" value="1"/>
</dbReference>
<dbReference type="PANTHER" id="PTHR13697:SF4">
    <property type="entry name" value="ATP-DEPENDENT 6-PHOSPHOFRUCTOKINASE"/>
    <property type="match status" value="1"/>
</dbReference>
<dbReference type="PANTHER" id="PTHR13697">
    <property type="entry name" value="PHOSPHOFRUCTOKINASE"/>
    <property type="match status" value="1"/>
</dbReference>
<dbReference type="Pfam" id="PF00365">
    <property type="entry name" value="PFK"/>
    <property type="match status" value="1"/>
</dbReference>
<dbReference type="PIRSF" id="PIRSF000532">
    <property type="entry name" value="ATP_PFK_prok"/>
    <property type="match status" value="1"/>
</dbReference>
<dbReference type="PRINTS" id="PR00476">
    <property type="entry name" value="PHFRCTKINASE"/>
</dbReference>
<dbReference type="SUPFAM" id="SSF53784">
    <property type="entry name" value="Phosphofructokinase"/>
    <property type="match status" value="1"/>
</dbReference>
<dbReference type="PROSITE" id="PS00433">
    <property type="entry name" value="PHOSPHOFRUCTOKINASE"/>
    <property type="match status" value="1"/>
</dbReference>
<keyword id="KW-0002">3D-structure</keyword>
<keyword id="KW-0021">Allosteric enzyme</keyword>
<keyword id="KW-0067">ATP-binding</keyword>
<keyword id="KW-0963">Cytoplasm</keyword>
<keyword id="KW-0324">Glycolysis</keyword>
<keyword id="KW-0418">Kinase</keyword>
<keyword id="KW-0460">Magnesium</keyword>
<keyword id="KW-0479">Metal-binding</keyword>
<keyword id="KW-0547">Nucleotide-binding</keyword>
<keyword id="KW-1185">Reference proteome</keyword>
<keyword id="KW-0808">Transferase</keyword>
<feature type="chain" id="PRO_0000430112" description="ATP-dependent 6-phosphofructokinase">
    <location>
        <begin position="1"/>
        <end position="322"/>
    </location>
</feature>
<feature type="active site" description="Proton acceptor" evidence="1">
    <location>
        <position position="129"/>
    </location>
</feature>
<feature type="binding site" evidence="1">
    <location>
        <position position="11"/>
    </location>
    <ligand>
        <name>ATP</name>
        <dbReference type="ChEBI" id="CHEBI:30616"/>
    </ligand>
</feature>
<feature type="binding site" evidence="1">
    <location>
        <begin position="21"/>
        <end position="25"/>
    </location>
    <ligand>
        <name>ADP</name>
        <dbReference type="ChEBI" id="CHEBI:456216"/>
        <note>allosteric activator; ligand shared between dimeric partners</note>
    </ligand>
</feature>
<feature type="binding site" evidence="1 3">
    <location>
        <begin position="72"/>
        <end position="73"/>
    </location>
    <ligand>
        <name>ATP</name>
        <dbReference type="ChEBI" id="CHEBI:30616"/>
    </ligand>
</feature>
<feature type="binding site" evidence="1 3">
    <location>
        <begin position="102"/>
        <end position="105"/>
    </location>
    <ligand>
        <name>ATP</name>
        <dbReference type="ChEBI" id="CHEBI:30616"/>
    </ligand>
</feature>
<feature type="binding site" evidence="1">
    <location>
        <position position="103"/>
    </location>
    <ligand>
        <name>Mg(2+)</name>
        <dbReference type="ChEBI" id="CHEBI:18420"/>
        <note>catalytic</note>
    </ligand>
</feature>
<feature type="binding site" description="in other chain" evidence="1 3">
    <location>
        <begin position="127"/>
        <end position="129"/>
    </location>
    <ligand>
        <name>substrate</name>
        <note>ligand shared between dimeric partners</note>
    </ligand>
</feature>
<feature type="binding site" description="in other chain" evidence="1">
    <location>
        <position position="156"/>
    </location>
    <ligand>
        <name>ADP</name>
        <dbReference type="ChEBI" id="CHEBI:456216"/>
        <note>allosteric activator; ligand shared between dimeric partners</note>
    </ligand>
</feature>
<feature type="binding site" evidence="1">
    <location>
        <position position="164"/>
    </location>
    <ligand>
        <name>substrate</name>
        <note>ligand shared between dimeric partners</note>
    </ligand>
</feature>
<feature type="binding site" description="in other chain" evidence="1 3">
    <location>
        <begin position="171"/>
        <end position="173"/>
    </location>
    <ligand>
        <name>substrate</name>
        <note>ligand shared between dimeric partners</note>
    </ligand>
</feature>
<feature type="binding site" description="in other chain" evidence="1">
    <location>
        <begin position="187"/>
        <end position="189"/>
    </location>
    <ligand>
        <name>ADP</name>
        <dbReference type="ChEBI" id="CHEBI:456216"/>
        <note>allosteric activator; ligand shared between dimeric partners</note>
    </ligand>
</feature>
<feature type="binding site" description="in other chain" evidence="1">
    <location>
        <position position="213"/>
    </location>
    <ligand>
        <name>ADP</name>
        <dbReference type="ChEBI" id="CHEBI:456216"/>
        <note>allosteric activator; ligand shared between dimeric partners</note>
    </ligand>
</feature>
<feature type="binding site" description="in other chain" evidence="1">
    <location>
        <begin position="215"/>
        <end position="217"/>
    </location>
    <ligand>
        <name>ADP</name>
        <dbReference type="ChEBI" id="CHEBI:456216"/>
        <note>allosteric activator; ligand shared between dimeric partners</note>
    </ligand>
</feature>
<feature type="binding site" description="in other chain" evidence="1 3">
    <location>
        <position position="224"/>
    </location>
    <ligand>
        <name>substrate</name>
        <note>ligand shared between dimeric partners</note>
    </ligand>
</feature>
<feature type="binding site" evidence="1">
    <location>
        <position position="245"/>
    </location>
    <ligand>
        <name>substrate</name>
        <note>ligand shared between dimeric partners</note>
    </ligand>
</feature>
<feature type="binding site" description="in other chain" evidence="1 3">
    <location>
        <begin position="251"/>
        <end position="254"/>
    </location>
    <ligand>
        <name>substrate</name>
        <note>ligand shared between dimeric partners</note>
    </ligand>
</feature>
<feature type="mutagenesis site" description="Exhibits higher affinity for fructose 6-phosphate and higher catalytic activity with a loss of dimer conversion; in association with A-151." evidence="3">
    <original>G</original>
    <variation>D</variation>
    <location>
        <position position="150"/>
    </location>
</feature>
<feature type="mutagenesis site" description="Exhibits higher affinity for fructose 6-phosphate and higher catalytic activity with a loss of tetramer-dimer conversion; in association with D-150." evidence="3">
    <original>L</original>
    <variation>A</variation>
    <location>
        <position position="151"/>
    </location>
</feature>
<feature type="mutagenesis site" description="Complete loss of fructose 6-phosphate binding." evidence="3">
    <original>R</original>
    <variation>A</variation>
    <location>
        <position position="164"/>
    </location>
</feature>
<feature type="mutagenesis site" description="Complete loss of fructose 6-phosphate binding." evidence="3">
    <original>R</original>
    <variation>A</variation>
    <location>
        <position position="245"/>
    </location>
</feature>
<feature type="strand" evidence="10">
    <location>
        <begin position="3"/>
        <end position="8"/>
    </location>
</feature>
<feature type="helix" evidence="10">
    <location>
        <begin position="16"/>
        <end position="29"/>
    </location>
</feature>
<feature type="strand" evidence="10">
    <location>
        <begin position="33"/>
        <end position="37"/>
    </location>
</feature>
<feature type="helix" evidence="10">
    <location>
        <begin position="40"/>
        <end position="45"/>
    </location>
</feature>
<feature type="strand" evidence="10">
    <location>
        <begin position="49"/>
        <end position="51"/>
    </location>
</feature>
<feature type="helix" evidence="10">
    <location>
        <begin position="54"/>
        <end position="57"/>
    </location>
</feature>
<feature type="helix" evidence="10">
    <location>
        <begin position="74"/>
        <end position="77"/>
    </location>
</feature>
<feature type="helix" evidence="10">
    <location>
        <begin position="79"/>
        <end position="90"/>
    </location>
</feature>
<feature type="turn" evidence="10">
    <location>
        <begin position="91"/>
        <end position="93"/>
    </location>
</feature>
<feature type="strand" evidence="10">
    <location>
        <begin position="96"/>
        <end position="101"/>
    </location>
</feature>
<feature type="helix" evidence="10">
    <location>
        <begin position="103"/>
        <end position="115"/>
    </location>
</feature>
<feature type="strand" evidence="10">
    <location>
        <begin position="120"/>
        <end position="129"/>
    </location>
</feature>
<feature type="helix" evidence="10">
    <location>
        <begin position="141"/>
        <end position="161"/>
    </location>
</feature>
<feature type="strand" evidence="10">
    <location>
        <begin position="165"/>
        <end position="170"/>
    </location>
</feature>
<feature type="helix" evidence="10">
    <location>
        <begin position="177"/>
        <end position="186"/>
    </location>
</feature>
<feature type="strand" evidence="10">
    <location>
        <begin position="189"/>
        <end position="192"/>
    </location>
</feature>
<feature type="helix" evidence="10">
    <location>
        <begin position="200"/>
        <end position="211"/>
    </location>
</feature>
<feature type="turn" evidence="10">
    <location>
        <begin position="212"/>
        <end position="214"/>
    </location>
</feature>
<feature type="strand" evidence="10">
    <location>
        <begin position="219"/>
        <end position="223"/>
    </location>
</feature>
<feature type="turn" evidence="10">
    <location>
        <begin position="224"/>
        <end position="226"/>
    </location>
</feature>
<feature type="helix" evidence="10">
    <location>
        <begin position="229"/>
        <end position="239"/>
    </location>
</feature>
<feature type="strand" evidence="10">
    <location>
        <begin position="244"/>
        <end position="248"/>
    </location>
</feature>
<feature type="helix" evidence="10">
    <location>
        <begin position="250"/>
        <end position="254"/>
    </location>
</feature>
<feature type="helix" evidence="10">
    <location>
        <begin position="260"/>
        <end position="278"/>
    </location>
</feature>
<feature type="strand" evidence="10">
    <location>
        <begin position="283"/>
        <end position="289"/>
    </location>
</feature>
<feature type="strand" evidence="10">
    <location>
        <begin position="292"/>
        <end position="297"/>
    </location>
</feature>
<feature type="helix" evidence="10">
    <location>
        <begin position="298"/>
        <end position="302"/>
    </location>
</feature>
<feature type="helix" evidence="10">
    <location>
        <begin position="311"/>
        <end position="320"/>
    </location>
</feature>
<accession>Q2FXM8</accession>
<protein>
    <recommendedName>
        <fullName evidence="1">ATP-dependent 6-phosphofructokinase</fullName>
        <shortName evidence="1">ATP-PFK</shortName>
        <shortName evidence="1">Phosphofructokinase</shortName>
        <ecNumber evidence="1 3">2.7.1.11</ecNumber>
    </recommendedName>
    <alternativeName>
        <fullName evidence="1">Phosphohexokinase</fullName>
    </alternativeName>
</protein>
<proteinExistence type="evidence at protein level"/>
<organism>
    <name type="scientific">Staphylococcus aureus (strain NCTC 8325 / PS 47)</name>
    <dbReference type="NCBI Taxonomy" id="93061"/>
    <lineage>
        <taxon>Bacteria</taxon>
        <taxon>Bacillati</taxon>
        <taxon>Bacillota</taxon>
        <taxon>Bacilli</taxon>
        <taxon>Bacillales</taxon>
        <taxon>Staphylococcaceae</taxon>
        <taxon>Staphylococcus</taxon>
    </lineage>
</organism>
<reference key="1">
    <citation type="book" date="2006" name="Gram positive pathogens, 2nd edition">
        <title>The Staphylococcus aureus NCTC 8325 genome.</title>
        <editorList>
            <person name="Fischetti V."/>
            <person name="Novick R."/>
            <person name="Ferretti J."/>
            <person name="Portnoy D."/>
            <person name="Rood J."/>
        </editorList>
        <authorList>
            <person name="Gillaspy A.F."/>
            <person name="Worrell V."/>
            <person name="Orvis J."/>
            <person name="Roe B.A."/>
            <person name="Dyer D.W."/>
            <person name="Iandolo J.J."/>
        </authorList>
    </citation>
    <scope>NUCLEOTIDE SEQUENCE [LARGE SCALE GENOMIC DNA]</scope>
    <source>
        <strain>NCTC 8325 / PS 47</strain>
    </source>
</reference>
<reference key="2">
    <citation type="journal article" date="2011" name="J. Bacteriol.">
        <title>Characterization of components of the Staphylococcus aureus mRNA degradosome holoenzyme-like complex.</title>
        <authorList>
            <person name="Roux C.M."/>
            <person name="DeMuth J.P."/>
            <person name="Dunman P.M."/>
        </authorList>
    </citation>
    <scope>INTERACTION WITH CSHA</scope>
    <scope>SUBUNIT</scope>
    <source>
        <strain>UAMS-1</strain>
    </source>
</reference>
<reference evidence="5 6 7 8 9" key="3">
    <citation type="journal article" date="2018" name="Biochemistry">
        <title>Structural insights into the regulation of Staphylococcus aureus phosphofructokinase by tetramer-dimer conversion.</title>
        <authorList>
            <person name="Tian T."/>
            <person name="Wang C."/>
            <person name="Wu M."/>
            <person name="Zhang X."/>
            <person name="Zang J."/>
        </authorList>
    </citation>
    <scope>X-RAY CRYSTALLOGRAPHY (1.95 ANGSTROMS) IN COMPLEXES WITH ATP ANALOG; FRUCTOSE-6-PHOSPHATE; ADP AND ATP</scope>
    <scope>FUNCTION</scope>
    <scope>COFACTOR</scope>
    <scope>ACTIVITY REGULATION</scope>
    <scope>SUBUNIT</scope>
    <scope>MUTAGENESIS OF GLY-150; LEU-151; ARG-164 AND ARG-245</scope>
    <scope>CATALYTIC ACTIVITY</scope>
</reference>
<sequence length="322" mass="34840">MKKIAVLTSGGDSPGMNAAVRAVVRTAIYNEIEVYGVYHGYQGLLNDDIHKLELGSVGDTIQRGGTFLYSARCPEFKEQEVRKVAIENLRKRGIEGLVVIGGDGSYRGAQRISEECKEIQTIGIPGTIDNDINGTDFTIGFDTALNTIIGLVDKIRDTASSHARTFIIEAMGRDCGDLALWAGLSVGAETIVVPEVKTDIKEIADKIEQGIKRGKKHSIVLVAEGCMTAQDCQKELSQYINVDNRVSVLGHVQRGGSPTGADRVLASRLGGYAVDLLMQGETAKGVGIKNNKIVATSFDEIFDGKDHKFDYSLYELANKLSI</sequence>
<gene>
    <name evidence="1" type="primary">pfkA</name>
    <name type="ordered locus">SAOUHSC_01807</name>
</gene>
<name>PFKA_STAA8</name>
<evidence type="ECO:0000255" key="1">
    <source>
        <dbReference type="HAMAP-Rule" id="MF_00339"/>
    </source>
</evidence>
<evidence type="ECO:0000269" key="2">
    <source>
    </source>
</evidence>
<evidence type="ECO:0000269" key="3">
    <source>
    </source>
</evidence>
<evidence type="ECO:0000305" key="4"/>
<evidence type="ECO:0007744" key="5">
    <source>
        <dbReference type="PDB" id="5XZ6"/>
    </source>
</evidence>
<evidence type="ECO:0007744" key="6">
    <source>
        <dbReference type="PDB" id="5XZ7"/>
    </source>
</evidence>
<evidence type="ECO:0007744" key="7">
    <source>
        <dbReference type="PDB" id="5XZ8"/>
    </source>
</evidence>
<evidence type="ECO:0007744" key="8">
    <source>
        <dbReference type="PDB" id="5XZ9"/>
    </source>
</evidence>
<evidence type="ECO:0007744" key="9">
    <source>
        <dbReference type="PDB" id="5XZA"/>
    </source>
</evidence>
<evidence type="ECO:0007829" key="10">
    <source>
        <dbReference type="PDB" id="5XZ8"/>
    </source>
</evidence>